<feature type="chain" id="PRO_0000144132" description="DNA primase DnaG">
    <location>
        <begin position="1"/>
        <end position="406"/>
    </location>
</feature>
<feature type="domain" description="Toprim" evidence="1">
    <location>
        <begin position="169"/>
        <end position="247"/>
    </location>
</feature>
<feature type="binding site" evidence="1">
    <location>
        <position position="175"/>
    </location>
    <ligand>
        <name>Mg(2+)</name>
        <dbReference type="ChEBI" id="CHEBI:18420"/>
        <label>1</label>
        <note>catalytic</note>
    </ligand>
</feature>
<feature type="binding site" evidence="1">
    <location>
        <position position="220"/>
    </location>
    <ligand>
        <name>Mg(2+)</name>
        <dbReference type="ChEBI" id="CHEBI:18420"/>
        <label>1</label>
        <note>catalytic</note>
    </ligand>
</feature>
<feature type="binding site" evidence="1">
    <location>
        <position position="220"/>
    </location>
    <ligand>
        <name>Mg(2+)</name>
        <dbReference type="ChEBI" id="CHEBI:18420"/>
        <label>2</label>
    </ligand>
</feature>
<feature type="binding site" evidence="1">
    <location>
        <position position="222"/>
    </location>
    <ligand>
        <name>Mg(2+)</name>
        <dbReference type="ChEBI" id="CHEBI:18420"/>
        <label>2</label>
    </ligand>
</feature>
<feature type="mutagenesis site" description="Strong decrease of primase activity." evidence="4">
    <original>E</original>
    <variation>Q</variation>
    <location>
        <position position="175"/>
    </location>
</feature>
<feature type="mutagenesis site" description="Decreases binding affinity to DNA. Does not affect primase activity." evidence="7">
    <original>D</original>
    <variation>A</variation>
    <location>
        <position position="179"/>
    </location>
</feature>
<feature type="mutagenesis site" description="Decreases binding affinity to DNA and primase activity." evidence="7">
    <original>D</original>
    <variation>A</variation>
    <location>
        <position position="220"/>
    </location>
</feature>
<feature type="mutagenesis site" description="Decreases binding affinity to DNA and primase activity." evidence="7">
    <original>D</original>
    <variation>A</variation>
    <location>
        <position position="222"/>
    </location>
</feature>
<gene>
    <name evidence="1" type="primary">dnaG</name>
    <name type="ordered locus">SSO0079</name>
    <name type="ORF">C04_042</name>
    <name type="ORF">C05_030</name>
</gene>
<accession>P95980</accession>
<proteinExistence type="evidence at protein level"/>
<evidence type="ECO:0000255" key="1">
    <source>
        <dbReference type="HAMAP-Rule" id="MF_00007"/>
    </source>
</evidence>
<evidence type="ECO:0000269" key="2">
    <source>
    </source>
</evidence>
<evidence type="ECO:0000269" key="3">
    <source>
    </source>
</evidence>
<evidence type="ECO:0000269" key="4">
    <source>
    </source>
</evidence>
<evidence type="ECO:0000269" key="5">
    <source>
    </source>
</evidence>
<evidence type="ECO:0000269" key="6">
    <source>
    </source>
</evidence>
<evidence type="ECO:0000269" key="7">
    <source>
    </source>
</evidence>
<dbReference type="EC" id="2.7.7.101" evidence="1 4"/>
<dbReference type="EMBL" id="Y08257">
    <property type="protein sequence ID" value="CAA69522.1"/>
    <property type="molecule type" value="Genomic_DNA"/>
</dbReference>
<dbReference type="EMBL" id="AE006641">
    <property type="protein sequence ID" value="AAK40440.1"/>
    <property type="molecule type" value="Genomic_DNA"/>
</dbReference>
<dbReference type="PIR" id="S75408">
    <property type="entry name" value="S75408"/>
</dbReference>
<dbReference type="SMR" id="P95980"/>
<dbReference type="FunCoup" id="P95980">
    <property type="interactions" value="2"/>
</dbReference>
<dbReference type="IntAct" id="P95980">
    <property type="interactions" value="2"/>
</dbReference>
<dbReference type="MINT" id="P95980"/>
<dbReference type="STRING" id="273057.SSO0079"/>
<dbReference type="PaxDb" id="273057-SSO0079"/>
<dbReference type="EnsemblBacteria" id="AAK40440">
    <property type="protein sequence ID" value="AAK40440"/>
    <property type="gene ID" value="SSO0079"/>
</dbReference>
<dbReference type="KEGG" id="sso:SSO0079"/>
<dbReference type="PATRIC" id="fig|273057.12.peg.79"/>
<dbReference type="eggNOG" id="arCOG04281">
    <property type="taxonomic scope" value="Archaea"/>
</dbReference>
<dbReference type="HOGENOM" id="CLU_034626_0_0_2"/>
<dbReference type="InParanoid" id="P95980"/>
<dbReference type="PhylomeDB" id="P95980"/>
<dbReference type="BRENDA" id="2.7.7.101">
    <property type="organism ID" value="6163"/>
</dbReference>
<dbReference type="Proteomes" id="UP000001974">
    <property type="component" value="Chromosome"/>
</dbReference>
<dbReference type="GO" id="GO:0005737">
    <property type="term" value="C:cytoplasm"/>
    <property type="evidence" value="ECO:0000318"/>
    <property type="project" value="GO_Central"/>
</dbReference>
<dbReference type="GO" id="GO:0000428">
    <property type="term" value="C:DNA-directed RNA polymerase complex"/>
    <property type="evidence" value="ECO:0007669"/>
    <property type="project" value="UniProtKB-KW"/>
</dbReference>
<dbReference type="GO" id="GO:0000178">
    <property type="term" value="C:exosome (RNase complex)"/>
    <property type="evidence" value="ECO:0007669"/>
    <property type="project" value="UniProtKB-KW"/>
</dbReference>
<dbReference type="GO" id="GO:1990077">
    <property type="term" value="C:primosome complex"/>
    <property type="evidence" value="ECO:0007669"/>
    <property type="project" value="UniProtKB-KW"/>
</dbReference>
<dbReference type="GO" id="GO:0003899">
    <property type="term" value="F:DNA-directed RNA polymerase activity"/>
    <property type="evidence" value="ECO:0007669"/>
    <property type="project" value="InterPro"/>
</dbReference>
<dbReference type="GO" id="GO:0046872">
    <property type="term" value="F:metal ion binding"/>
    <property type="evidence" value="ECO:0007669"/>
    <property type="project" value="UniProtKB-KW"/>
</dbReference>
<dbReference type="GO" id="GO:0008143">
    <property type="term" value="F:poly(A) binding"/>
    <property type="evidence" value="ECO:0007669"/>
    <property type="project" value="InterPro"/>
</dbReference>
<dbReference type="GO" id="GO:0006269">
    <property type="term" value="P:DNA replication, synthesis of primer"/>
    <property type="evidence" value="ECO:0000318"/>
    <property type="project" value="GO_Central"/>
</dbReference>
<dbReference type="CDD" id="cd01029">
    <property type="entry name" value="TOPRIM_primases"/>
    <property type="match status" value="1"/>
</dbReference>
<dbReference type="FunFam" id="3.40.1360.10:FF:000010">
    <property type="entry name" value="DNA primase DnaG"/>
    <property type="match status" value="1"/>
</dbReference>
<dbReference type="Gene3D" id="3.40.1360.10">
    <property type="match status" value="1"/>
</dbReference>
<dbReference type="HAMAP" id="MF_00007">
    <property type="entry name" value="DNA_primase_DnaG_arc"/>
    <property type="match status" value="1"/>
</dbReference>
<dbReference type="InterPro" id="IPR050219">
    <property type="entry name" value="DnaG_primase"/>
</dbReference>
<dbReference type="InterPro" id="IPR020607">
    <property type="entry name" value="Primase_DnaG_arc"/>
</dbReference>
<dbReference type="InterPro" id="IPR034154">
    <property type="entry name" value="TOPRIM_DnaG/twinkle"/>
</dbReference>
<dbReference type="InterPro" id="IPR006171">
    <property type="entry name" value="TOPRIM_dom"/>
</dbReference>
<dbReference type="NCBIfam" id="NF003108">
    <property type="entry name" value="PRK04031.1-1"/>
    <property type="match status" value="1"/>
</dbReference>
<dbReference type="PANTHER" id="PTHR30313">
    <property type="entry name" value="DNA PRIMASE"/>
    <property type="match status" value="1"/>
</dbReference>
<dbReference type="PANTHER" id="PTHR30313:SF2">
    <property type="entry name" value="DNA PRIMASE"/>
    <property type="match status" value="1"/>
</dbReference>
<dbReference type="Pfam" id="PF13662">
    <property type="entry name" value="Toprim_4"/>
    <property type="match status" value="1"/>
</dbReference>
<dbReference type="SMART" id="SM00493">
    <property type="entry name" value="TOPRIM"/>
    <property type="match status" value="1"/>
</dbReference>
<dbReference type="SUPFAM" id="SSF110455">
    <property type="entry name" value="Toprim domain"/>
    <property type="match status" value="1"/>
</dbReference>
<dbReference type="PROSITE" id="PS50880">
    <property type="entry name" value="TOPRIM"/>
    <property type="match status" value="1"/>
</dbReference>
<protein>
    <recommendedName>
        <fullName evidence="1">DNA primase DnaG</fullName>
        <ecNumber evidence="1 4">2.7.7.101</ecNumber>
    </recommendedName>
</protein>
<comment type="function">
    <text evidence="1 4 6 7">RNA polymerase that catalyzes the synthesis of short RNA molecules used as primers for DNA polymerase during DNA replication. Can use NTPs but not dNTPs. Binds DNA. Also part of the exosome, which is a complex involved in RNA degradation. Acts as a poly(A)-binding protein that enhances the interaction between heteromeric, adenine-rich transcripts and the exosome.</text>
</comment>
<comment type="catalytic activity">
    <reaction evidence="1 4">
        <text>ssDNA + n NTP = ssDNA/pppN(pN)n-1 hybrid + (n-1) diphosphate.</text>
        <dbReference type="EC" id="2.7.7.101"/>
    </reaction>
</comment>
<comment type="cofactor">
    <cofactor evidence="1">
        <name>Mg(2+)</name>
        <dbReference type="ChEBI" id="CHEBI:18420"/>
    </cofactor>
    <text evidence="1">Binds two Mg(2+) per subunit.</text>
</comment>
<comment type="biophysicochemical properties">
    <kinetics>
        <KM evidence="4">85 uM for NTPs</KM>
        <Vmax evidence="4">0.72 pmol/min/ug enzyme</Vmax>
        <text evidence="4">kcat is 0.033 min(-1).</text>
    </kinetics>
    <temperatureDependence>
        <text evidence="4">Optimum temperature is 70 degrees Celsius.</text>
    </temperatureDependence>
</comment>
<comment type="subunit">
    <text evidence="1 2 3 4 5 6 7">Forms a ternary complex with MCM helicase and DNA. Component of the archaeal exosome complex. Interacts with Csl4 but not with Rrp4.</text>
</comment>
<comment type="similarity">
    <text evidence="1">Belongs to the archaeal DnaG primase family.</text>
</comment>
<sequence>MSFQMKYDIRLRFEVEGIVEKTDVIGAIFGQTENLFGDEFDLRELQDKGRLGRIIVEVKTKGGKSEGEIIIPSNLDRIETALIAAMVESVDKVGPYNSKFELIEIEDIRAEKLKKIIERAKGILSSWSKEKSLDIKEVINEISSAVKVGEITEYGPERLPAGPDVDKDPNLIIVEGRADVINLLRYGYKNVIAVEGATSRIPETLINLSKMKKTVIAFLDGDHGGDLILKELLSNNVKIDFVARAPIGREVEELTGKEIAKALSNMMPLTQYLKKVQEAEQAIAKNVIAKEEKPIQSETTQQVVQITLPQNILEEIKKLPGTLEGVLYDNNWNLIEKVQVRDIIPKLEAYEDNKVAYIIFDGVITQRLLDLASQKNIKMIIGARIGGINKRPQNVDILTFTDIISS</sequence>
<name>DNAG_SACS2</name>
<reference key="1">
    <citation type="journal article" date="1996" name="Mol. Microbiol.">
        <title>Organizational characteristics and information content of an archaeal genome: 156 kb of sequence from Sulfolobus solfataricus P2.</title>
        <authorList>
            <person name="Sensen C.W."/>
            <person name="Klenk H.-P."/>
            <person name="Singh R.K."/>
            <person name="Allard G."/>
            <person name="Chan C.C.-Y."/>
            <person name="Liu Q.Y."/>
            <person name="Penny S.L."/>
            <person name="Young F."/>
            <person name="Schenk M.E."/>
            <person name="Gaasterland T."/>
            <person name="Doolittle W.F."/>
            <person name="Ragan M.A."/>
            <person name="Charlebois R.L."/>
        </authorList>
    </citation>
    <scope>NUCLEOTIDE SEQUENCE [GENOMIC DNA]</scope>
    <source>
        <strain>ATCC 35092 / DSM 1617 / JCM 11322 / P2</strain>
    </source>
</reference>
<reference key="2">
    <citation type="journal article" date="2001" name="Proc. Natl. Acad. Sci. U.S.A.">
        <title>The complete genome of the crenarchaeon Sulfolobus solfataricus P2.</title>
        <authorList>
            <person name="She Q."/>
            <person name="Singh R.K."/>
            <person name="Confalonieri F."/>
            <person name="Zivanovic Y."/>
            <person name="Allard G."/>
            <person name="Awayez M.J."/>
            <person name="Chan-Weiher C.C.-Y."/>
            <person name="Clausen I.G."/>
            <person name="Curtis B.A."/>
            <person name="De Moors A."/>
            <person name="Erauso G."/>
            <person name="Fletcher C."/>
            <person name="Gordon P.M.K."/>
            <person name="Heikamp-de Jong I."/>
            <person name="Jeffries A.C."/>
            <person name="Kozera C.J."/>
            <person name="Medina N."/>
            <person name="Peng X."/>
            <person name="Thi-Ngoc H.P."/>
            <person name="Redder P."/>
            <person name="Schenk M.E."/>
            <person name="Theriault C."/>
            <person name="Tolstrup N."/>
            <person name="Charlebois R.L."/>
            <person name="Doolittle W.F."/>
            <person name="Duguet M."/>
            <person name="Gaasterland T."/>
            <person name="Garrett R.A."/>
            <person name="Ragan M.A."/>
            <person name="Sensen C.W."/>
            <person name="Van der Oost J."/>
        </authorList>
    </citation>
    <scope>NUCLEOTIDE SEQUENCE [LARGE SCALE GENOMIC DNA]</scope>
    <source>
        <strain>ATCC 35092 / DSM 1617 / JCM 11322 / P2</strain>
    </source>
</reference>
<reference key="3">
    <citation type="journal article" date="2003" name="EMBO Rep.">
        <title>An exosome-like complex in Sulfolobus solfataricus.</title>
        <authorList>
            <person name="Evguenieva-Hackenberg E."/>
            <person name="Walter P."/>
            <person name="Hochleitner E."/>
            <person name="Lottspeich F."/>
            <person name="Klug G."/>
        </authorList>
    </citation>
    <scope>INTERACTION WITH EXOSOME</scope>
    <source>
        <strain>ATCC 35092 / DSM 1617 / JCM 11322 / P2</strain>
    </source>
</reference>
<reference key="4">
    <citation type="journal article" date="2006" name="Mol. Microbiol.">
        <title>Characterization of native and reconstituted exosome complexes from the hyperthermophilic archaeon Sulfolobus solfataricus.</title>
        <authorList>
            <person name="Walter P."/>
            <person name="Klein F."/>
            <person name="Lorentzen E."/>
            <person name="Ilchmann A."/>
            <person name="Klug G."/>
            <person name="Evguenieva-Hackenberg E."/>
        </authorList>
    </citation>
    <scope>INTERACTION WITH EXOSOME</scope>
</reference>
<reference key="5">
    <citation type="journal article" date="2010" name="J. Mol. Biol.">
        <title>Characterization of a functional DnaG-type primase in archaea: implications for a dual-primase system.</title>
        <authorList>
            <person name="Zuo Z."/>
            <person name="Rodgers C.J."/>
            <person name="Mikheikin A.L."/>
            <person name="Trakselis M.A."/>
        </authorList>
    </citation>
    <scope>FUNCTION AS A PRIMASE</scope>
    <scope>CATALYTIC ACTIVITY</scope>
    <scope>BIOPHYSICOCHEMICAL PROPERTIES</scope>
    <scope>SUBUNIT</scope>
    <scope>MUTAGENESIS OF GLU-175</scope>
</reference>
<reference key="6">
    <citation type="journal article" date="2012" name="Biochimie">
        <title>Heterogeneous complexes of the RNA exosome in Sulfolobus solfataricus.</title>
        <authorList>
            <person name="Witharana C."/>
            <person name="Roppelt V."/>
            <person name="Lochnit G."/>
            <person name="Klug G."/>
            <person name="Evguenieva-Hackenberg E."/>
        </authorList>
    </citation>
    <scope>INTERACTION WITH EXOSOME</scope>
    <source>
        <strain>ATCC 35092 / DSM 1617 / JCM 11322 / P2</strain>
    </source>
</reference>
<reference key="7">
    <citation type="journal article" date="2013" name="J. Mol. Biol.">
        <title>Novel interaction of the bacterial-Like DnaG primase with the MCM helicase in archaea.</title>
        <authorList>
            <person name="Bauer R.J."/>
            <person name="Graham B.W."/>
            <person name="Trakselis M.A."/>
        </authorList>
    </citation>
    <scope>FUNCTION</scope>
    <scope>INTERACTION WITH MCM AND DNA</scope>
    <scope>MUTAGENESIS OF ASP-179; ASP-220 AND ASP-222</scope>
</reference>
<reference key="8">
    <citation type="journal article" date="2013" name="RNA Biol.">
        <title>The archaeal DnaG protein needs Csl4 for binding to the exosome and enhances its interaction with adenine-rich RNAs.</title>
        <authorList>
            <person name="Hou L."/>
            <person name="Klug G."/>
            <person name="Evguenieva-Hackenberg E."/>
        </authorList>
    </citation>
    <scope>FUNCTION</scope>
    <scope>INTERACTION WITH CSL4</scope>
</reference>
<keyword id="KW-0235">DNA replication</keyword>
<keyword id="KW-0240">DNA-directed RNA polymerase</keyword>
<keyword id="KW-0271">Exosome</keyword>
<keyword id="KW-0460">Magnesium</keyword>
<keyword id="KW-0479">Metal-binding</keyword>
<keyword id="KW-0548">Nucleotidyltransferase</keyword>
<keyword id="KW-0639">Primosome</keyword>
<keyword id="KW-1185">Reference proteome</keyword>
<keyword id="KW-0804">Transcription</keyword>
<keyword id="KW-0808">Transferase</keyword>
<organism>
    <name type="scientific">Saccharolobus solfataricus (strain ATCC 35092 / DSM 1617 / JCM 11322 / P2)</name>
    <name type="common">Sulfolobus solfataricus</name>
    <dbReference type="NCBI Taxonomy" id="273057"/>
    <lineage>
        <taxon>Archaea</taxon>
        <taxon>Thermoproteota</taxon>
        <taxon>Thermoprotei</taxon>
        <taxon>Sulfolobales</taxon>
        <taxon>Sulfolobaceae</taxon>
        <taxon>Saccharolobus</taxon>
    </lineage>
</organism>